<organism>
    <name type="scientific">Staphylococcus aureus (strain COL)</name>
    <dbReference type="NCBI Taxonomy" id="93062"/>
    <lineage>
        <taxon>Bacteria</taxon>
        <taxon>Bacillati</taxon>
        <taxon>Bacillota</taxon>
        <taxon>Bacilli</taxon>
        <taxon>Bacillales</taxon>
        <taxon>Staphylococcaceae</taxon>
        <taxon>Staphylococcus</taxon>
    </lineage>
</organism>
<evidence type="ECO:0000255" key="1">
    <source>
        <dbReference type="HAMAP-Rule" id="MF_01200"/>
    </source>
</evidence>
<feature type="chain" id="PRO_0000134574" description="Orotidine 5'-phosphate decarboxylase">
    <location>
        <begin position="1"/>
        <end position="230"/>
    </location>
</feature>
<feature type="active site" description="Proton donor" evidence="1">
    <location>
        <position position="60"/>
    </location>
</feature>
<feature type="binding site" evidence="1">
    <location>
        <position position="10"/>
    </location>
    <ligand>
        <name>substrate</name>
    </ligand>
</feature>
<feature type="binding site" evidence="1">
    <location>
        <position position="31"/>
    </location>
    <ligand>
        <name>substrate</name>
    </ligand>
</feature>
<feature type="binding site" evidence="1">
    <location>
        <begin position="58"/>
        <end position="67"/>
    </location>
    <ligand>
        <name>substrate</name>
    </ligand>
</feature>
<feature type="binding site" evidence="1">
    <location>
        <position position="117"/>
    </location>
    <ligand>
        <name>substrate</name>
    </ligand>
</feature>
<feature type="binding site" evidence="1">
    <location>
        <position position="179"/>
    </location>
    <ligand>
        <name>substrate</name>
    </ligand>
</feature>
<feature type="binding site" evidence="1">
    <location>
        <position position="188"/>
    </location>
    <ligand>
        <name>substrate</name>
    </ligand>
</feature>
<feature type="binding site" evidence="1">
    <location>
        <position position="208"/>
    </location>
    <ligand>
        <name>substrate</name>
    </ligand>
</feature>
<feature type="binding site" evidence="1">
    <location>
        <position position="209"/>
    </location>
    <ligand>
        <name>substrate</name>
    </ligand>
</feature>
<proteinExistence type="inferred from homology"/>
<comment type="function">
    <text evidence="1">Catalyzes the decarboxylation of orotidine 5'-monophosphate (OMP) to uridine 5'-monophosphate (UMP).</text>
</comment>
<comment type="catalytic activity">
    <reaction evidence="1">
        <text>orotidine 5'-phosphate + H(+) = UMP + CO2</text>
        <dbReference type="Rhea" id="RHEA:11596"/>
        <dbReference type="ChEBI" id="CHEBI:15378"/>
        <dbReference type="ChEBI" id="CHEBI:16526"/>
        <dbReference type="ChEBI" id="CHEBI:57538"/>
        <dbReference type="ChEBI" id="CHEBI:57865"/>
        <dbReference type="EC" id="4.1.1.23"/>
    </reaction>
</comment>
<comment type="pathway">
    <text evidence="1">Pyrimidine metabolism; UMP biosynthesis via de novo pathway; UMP from orotate: step 2/2.</text>
</comment>
<comment type="subunit">
    <text evidence="1">Homodimer.</text>
</comment>
<comment type="similarity">
    <text evidence="1">Belongs to the OMP decarboxylase family. Type 1 subfamily.</text>
</comment>
<protein>
    <recommendedName>
        <fullName evidence="1">Orotidine 5'-phosphate decarboxylase</fullName>
        <ecNumber evidence="1">4.1.1.23</ecNumber>
    </recommendedName>
    <alternativeName>
        <fullName evidence="1">OMP decarboxylase</fullName>
        <shortName evidence="1">OMPDCase</shortName>
        <shortName evidence="1">OMPdecase</shortName>
    </alternativeName>
</protein>
<accession>Q5HGM8</accession>
<dbReference type="EC" id="4.1.1.23" evidence="1"/>
<dbReference type="EMBL" id="CP000046">
    <property type="protein sequence ID" value="AAW38053.1"/>
    <property type="molecule type" value="Genomic_DNA"/>
</dbReference>
<dbReference type="RefSeq" id="WP_000654061.1">
    <property type="nucleotide sequence ID" value="NZ_JBGOFO010000002.1"/>
</dbReference>
<dbReference type="SMR" id="Q5HGM8"/>
<dbReference type="KEGG" id="sac:SACOL1216"/>
<dbReference type="HOGENOM" id="CLU_067069_1_1_9"/>
<dbReference type="UniPathway" id="UPA00070">
    <property type="reaction ID" value="UER00120"/>
</dbReference>
<dbReference type="Proteomes" id="UP000000530">
    <property type="component" value="Chromosome"/>
</dbReference>
<dbReference type="GO" id="GO:0005829">
    <property type="term" value="C:cytosol"/>
    <property type="evidence" value="ECO:0007669"/>
    <property type="project" value="TreeGrafter"/>
</dbReference>
<dbReference type="GO" id="GO:0004590">
    <property type="term" value="F:orotidine-5'-phosphate decarboxylase activity"/>
    <property type="evidence" value="ECO:0007669"/>
    <property type="project" value="UniProtKB-UniRule"/>
</dbReference>
<dbReference type="GO" id="GO:0006207">
    <property type="term" value="P:'de novo' pyrimidine nucleobase biosynthetic process"/>
    <property type="evidence" value="ECO:0007669"/>
    <property type="project" value="InterPro"/>
</dbReference>
<dbReference type="GO" id="GO:0044205">
    <property type="term" value="P:'de novo' UMP biosynthetic process"/>
    <property type="evidence" value="ECO:0007669"/>
    <property type="project" value="UniProtKB-UniRule"/>
</dbReference>
<dbReference type="CDD" id="cd04725">
    <property type="entry name" value="OMP_decarboxylase_like"/>
    <property type="match status" value="1"/>
</dbReference>
<dbReference type="FunFam" id="3.20.20.70:FF:000015">
    <property type="entry name" value="Orotidine 5'-phosphate decarboxylase"/>
    <property type="match status" value="1"/>
</dbReference>
<dbReference type="Gene3D" id="3.20.20.70">
    <property type="entry name" value="Aldolase class I"/>
    <property type="match status" value="1"/>
</dbReference>
<dbReference type="HAMAP" id="MF_01200_B">
    <property type="entry name" value="OMPdecase_type1_B"/>
    <property type="match status" value="1"/>
</dbReference>
<dbReference type="InterPro" id="IPR013785">
    <property type="entry name" value="Aldolase_TIM"/>
</dbReference>
<dbReference type="InterPro" id="IPR014732">
    <property type="entry name" value="OMPdecase"/>
</dbReference>
<dbReference type="InterPro" id="IPR018089">
    <property type="entry name" value="OMPdecase_AS"/>
</dbReference>
<dbReference type="InterPro" id="IPR047596">
    <property type="entry name" value="OMPdecase_bac"/>
</dbReference>
<dbReference type="InterPro" id="IPR001754">
    <property type="entry name" value="OMPdeCOase_dom"/>
</dbReference>
<dbReference type="InterPro" id="IPR011060">
    <property type="entry name" value="RibuloseP-bd_barrel"/>
</dbReference>
<dbReference type="NCBIfam" id="NF001273">
    <property type="entry name" value="PRK00230.1"/>
    <property type="match status" value="1"/>
</dbReference>
<dbReference type="NCBIfam" id="TIGR01740">
    <property type="entry name" value="pyrF"/>
    <property type="match status" value="1"/>
</dbReference>
<dbReference type="PANTHER" id="PTHR32119">
    <property type="entry name" value="OROTIDINE 5'-PHOSPHATE DECARBOXYLASE"/>
    <property type="match status" value="1"/>
</dbReference>
<dbReference type="PANTHER" id="PTHR32119:SF2">
    <property type="entry name" value="OROTIDINE 5'-PHOSPHATE DECARBOXYLASE"/>
    <property type="match status" value="1"/>
</dbReference>
<dbReference type="Pfam" id="PF00215">
    <property type="entry name" value="OMPdecase"/>
    <property type="match status" value="1"/>
</dbReference>
<dbReference type="SMART" id="SM00934">
    <property type="entry name" value="OMPdecase"/>
    <property type="match status" value="1"/>
</dbReference>
<dbReference type="SUPFAM" id="SSF51366">
    <property type="entry name" value="Ribulose-phoshate binding barrel"/>
    <property type="match status" value="1"/>
</dbReference>
<dbReference type="PROSITE" id="PS00156">
    <property type="entry name" value="OMPDECASE"/>
    <property type="match status" value="1"/>
</dbReference>
<sequence length="230" mass="25596">MKDLPIIALDFESKEKVNQFLDLFDESLFVKVGMELFYQEGPQLINEIKERGHDVFLDLKLHDIPNTVGKAMEGLAKLNVDLVNVHAAGGVKMMSEAIKGLRKHNQDTKIIAVTQLTSTTEDMLRHEQNIQTSIEEAVLNYAKLANAAGLDGVVCSPLESRMLTEKLGTSFLKVTPGIRPKGASQNDQHRITTPEEARQLGSTHIVVGRPITQSDNPVESYHKIKESWLV</sequence>
<reference key="1">
    <citation type="journal article" date="2005" name="J. Bacteriol.">
        <title>Insights on evolution of virulence and resistance from the complete genome analysis of an early methicillin-resistant Staphylococcus aureus strain and a biofilm-producing methicillin-resistant Staphylococcus epidermidis strain.</title>
        <authorList>
            <person name="Gill S.R."/>
            <person name="Fouts D.E."/>
            <person name="Archer G.L."/>
            <person name="Mongodin E.F."/>
            <person name="DeBoy R.T."/>
            <person name="Ravel J."/>
            <person name="Paulsen I.T."/>
            <person name="Kolonay J.F."/>
            <person name="Brinkac L.M."/>
            <person name="Beanan M.J."/>
            <person name="Dodson R.J."/>
            <person name="Daugherty S.C."/>
            <person name="Madupu R."/>
            <person name="Angiuoli S.V."/>
            <person name="Durkin A.S."/>
            <person name="Haft D.H."/>
            <person name="Vamathevan J.J."/>
            <person name="Khouri H."/>
            <person name="Utterback T.R."/>
            <person name="Lee C."/>
            <person name="Dimitrov G."/>
            <person name="Jiang L."/>
            <person name="Qin H."/>
            <person name="Weidman J."/>
            <person name="Tran K."/>
            <person name="Kang K.H."/>
            <person name="Hance I.R."/>
            <person name="Nelson K.E."/>
            <person name="Fraser C.M."/>
        </authorList>
    </citation>
    <scope>NUCLEOTIDE SEQUENCE [LARGE SCALE GENOMIC DNA]</scope>
    <source>
        <strain>COL</strain>
    </source>
</reference>
<keyword id="KW-0210">Decarboxylase</keyword>
<keyword id="KW-0456">Lyase</keyword>
<keyword id="KW-0665">Pyrimidine biosynthesis</keyword>
<name>PYRF_STAAC</name>
<gene>
    <name evidence="1" type="primary">pyrF</name>
    <name type="ordered locus">SACOL1216</name>
</gene>